<proteinExistence type="inferred from homology"/>
<protein>
    <recommendedName>
        <fullName evidence="1">H(+)/Cl(-) exchange transporter ClcA</fullName>
    </recommendedName>
</protein>
<keyword id="KW-0050">Antiport</keyword>
<keyword id="KW-0997">Cell inner membrane</keyword>
<keyword id="KW-1003">Cell membrane</keyword>
<keyword id="KW-0868">Chloride</keyword>
<keyword id="KW-0406">Ion transport</keyword>
<keyword id="KW-0472">Membrane</keyword>
<keyword id="KW-1185">Reference proteome</keyword>
<keyword id="KW-0812">Transmembrane</keyword>
<keyword id="KW-1133">Transmembrane helix</keyword>
<keyword id="KW-0813">Transport</keyword>
<evidence type="ECO:0000255" key="1">
    <source>
        <dbReference type="HAMAP-Rule" id="MF_01128"/>
    </source>
</evidence>
<gene>
    <name evidence="1" type="primary">clcA</name>
    <name evidence="1" type="synonym">eriC</name>
    <name type="ordered locus">ECS88_0166</name>
</gene>
<comment type="function">
    <text evidence="1">Proton-coupled chloride transporter. Functions as antiport system and exchanges two chloride ions for 1 proton. Probably acts as an electrical shunt for an outwardly-directed proton pump that is linked to amino acid decarboxylation, as part of the extreme acid resistance (XAR) response.</text>
</comment>
<comment type="catalytic activity">
    <reaction evidence="1">
        <text>2 chloride(in) + H(+)(out) = 2 chloride(out) + H(+)(in)</text>
        <dbReference type="Rhea" id="RHEA:29567"/>
        <dbReference type="ChEBI" id="CHEBI:15378"/>
        <dbReference type="ChEBI" id="CHEBI:17996"/>
    </reaction>
</comment>
<comment type="subunit">
    <text evidence="1">Homodimer.</text>
</comment>
<comment type="subcellular location">
    <subcellularLocation>
        <location evidence="1">Cell inner membrane</location>
        <topology evidence="1">Multi-pass membrane protein</topology>
    </subcellularLocation>
</comment>
<comment type="similarity">
    <text evidence="1">Belongs to the chloride channel (TC 2.A.49) family. ClcA subfamily.</text>
</comment>
<organism>
    <name type="scientific">Escherichia coli O45:K1 (strain S88 / ExPEC)</name>
    <dbReference type="NCBI Taxonomy" id="585035"/>
    <lineage>
        <taxon>Bacteria</taxon>
        <taxon>Pseudomonadati</taxon>
        <taxon>Pseudomonadota</taxon>
        <taxon>Gammaproteobacteria</taxon>
        <taxon>Enterobacterales</taxon>
        <taxon>Enterobacteriaceae</taxon>
        <taxon>Escherichia</taxon>
    </lineage>
</organism>
<accession>B7MBD8</accession>
<sequence>MKTDTPSLETPQAARLRRRQLIRQLLERDKTPLAILFMAAVVGTLVGLAAVAFDKGVAWLQNQRMGALVHTADNYPLLLTVAFLCSAVLAMFGYFLVRKYAPEAGGSGIPEIEGALEDQRPVRWWRVLPVKFFGGLGTLGGGMVLGREGPTVQIGGNIGRMVLDVFRLKGDEARHTLLATGAAAGLAAAFNAPLAGILFIIEEMRPQFRYTLISIKAVFIGVIMSTIMYRIFNHEVALIDVGKLSDAPLNTLWLYLILGIIFGIFGPIFNKWVLGMQDLLHRVHGGNITKWVLMGGAIGGLCGLLGFVAPATSGGGFNLIPIATAGNFSMGMLVFIFVARVITTLLCFSSGAPGGIFAPMLALGTVLGTAFGMVAVELFPQYHLEAGTFAIAGMGALLAASIRAPLTGIILVLEMTDNYQLILPMIITGLGATLLAQFTGGKPLYSAILARTLAKQEAEQLARSKAASARENT</sequence>
<dbReference type="EMBL" id="CU928161">
    <property type="protein sequence ID" value="CAR01531.1"/>
    <property type="molecule type" value="Genomic_DNA"/>
</dbReference>
<dbReference type="RefSeq" id="WP_000845407.1">
    <property type="nucleotide sequence ID" value="NC_011742.1"/>
</dbReference>
<dbReference type="SMR" id="B7MBD8"/>
<dbReference type="KEGG" id="ecz:ECS88_0166"/>
<dbReference type="HOGENOM" id="CLU_015263_7_0_6"/>
<dbReference type="Proteomes" id="UP000000747">
    <property type="component" value="Chromosome"/>
</dbReference>
<dbReference type="GO" id="GO:0005886">
    <property type="term" value="C:plasma membrane"/>
    <property type="evidence" value="ECO:0007669"/>
    <property type="project" value="UniProtKB-SubCell"/>
</dbReference>
<dbReference type="GO" id="GO:0015297">
    <property type="term" value="F:antiporter activity"/>
    <property type="evidence" value="ECO:0007669"/>
    <property type="project" value="UniProtKB-UniRule"/>
</dbReference>
<dbReference type="GO" id="GO:0005247">
    <property type="term" value="F:voltage-gated chloride channel activity"/>
    <property type="evidence" value="ECO:0007669"/>
    <property type="project" value="TreeGrafter"/>
</dbReference>
<dbReference type="CDD" id="cd01031">
    <property type="entry name" value="EriC"/>
    <property type="match status" value="1"/>
</dbReference>
<dbReference type="FunFam" id="1.10.3080.10:FF:000005">
    <property type="entry name" value="H(+)/Cl(-) exchange transporter ClcA"/>
    <property type="match status" value="1"/>
</dbReference>
<dbReference type="Gene3D" id="1.10.3080.10">
    <property type="entry name" value="Clc chloride channel"/>
    <property type="match status" value="1"/>
</dbReference>
<dbReference type="HAMAP" id="MF_01128">
    <property type="entry name" value="CLC_ClcA"/>
    <property type="match status" value="1"/>
</dbReference>
<dbReference type="InterPro" id="IPR023861">
    <property type="entry name" value="Cl-channel_ClcA"/>
</dbReference>
<dbReference type="InterPro" id="IPR014743">
    <property type="entry name" value="Cl-channel_core"/>
</dbReference>
<dbReference type="InterPro" id="IPR001807">
    <property type="entry name" value="ClC"/>
</dbReference>
<dbReference type="NCBIfam" id="NF003640">
    <property type="entry name" value="PRK05277.1"/>
    <property type="match status" value="1"/>
</dbReference>
<dbReference type="PANTHER" id="PTHR45711">
    <property type="entry name" value="CHLORIDE CHANNEL PROTEIN"/>
    <property type="match status" value="1"/>
</dbReference>
<dbReference type="PANTHER" id="PTHR45711:SF6">
    <property type="entry name" value="CHLORIDE CHANNEL PROTEIN"/>
    <property type="match status" value="1"/>
</dbReference>
<dbReference type="Pfam" id="PF00654">
    <property type="entry name" value="Voltage_CLC"/>
    <property type="match status" value="1"/>
</dbReference>
<dbReference type="PRINTS" id="PR00762">
    <property type="entry name" value="CLCHANNEL"/>
</dbReference>
<dbReference type="SUPFAM" id="SSF81340">
    <property type="entry name" value="Clc chloride channel"/>
    <property type="match status" value="1"/>
</dbReference>
<name>CLCA_ECO45</name>
<reference key="1">
    <citation type="journal article" date="2009" name="PLoS Genet.">
        <title>Organised genome dynamics in the Escherichia coli species results in highly diverse adaptive paths.</title>
        <authorList>
            <person name="Touchon M."/>
            <person name="Hoede C."/>
            <person name="Tenaillon O."/>
            <person name="Barbe V."/>
            <person name="Baeriswyl S."/>
            <person name="Bidet P."/>
            <person name="Bingen E."/>
            <person name="Bonacorsi S."/>
            <person name="Bouchier C."/>
            <person name="Bouvet O."/>
            <person name="Calteau A."/>
            <person name="Chiapello H."/>
            <person name="Clermont O."/>
            <person name="Cruveiller S."/>
            <person name="Danchin A."/>
            <person name="Diard M."/>
            <person name="Dossat C."/>
            <person name="Karoui M.E."/>
            <person name="Frapy E."/>
            <person name="Garry L."/>
            <person name="Ghigo J.M."/>
            <person name="Gilles A.M."/>
            <person name="Johnson J."/>
            <person name="Le Bouguenec C."/>
            <person name="Lescat M."/>
            <person name="Mangenot S."/>
            <person name="Martinez-Jehanne V."/>
            <person name="Matic I."/>
            <person name="Nassif X."/>
            <person name="Oztas S."/>
            <person name="Petit M.A."/>
            <person name="Pichon C."/>
            <person name="Rouy Z."/>
            <person name="Ruf C.S."/>
            <person name="Schneider D."/>
            <person name="Tourret J."/>
            <person name="Vacherie B."/>
            <person name="Vallenet D."/>
            <person name="Medigue C."/>
            <person name="Rocha E.P.C."/>
            <person name="Denamur E."/>
        </authorList>
    </citation>
    <scope>NUCLEOTIDE SEQUENCE [LARGE SCALE GENOMIC DNA]</scope>
    <source>
        <strain>S88 / ExPEC</strain>
    </source>
</reference>
<feature type="chain" id="PRO_1000137293" description="H(+)/Cl(-) exchange transporter ClcA">
    <location>
        <begin position="1"/>
        <end position="473"/>
    </location>
</feature>
<feature type="topological domain" description="Cytoplasmic" evidence="1">
    <location>
        <begin position="1"/>
        <end position="32"/>
    </location>
</feature>
<feature type="transmembrane region" description="Helical" evidence="1">
    <location>
        <begin position="33"/>
        <end position="69"/>
    </location>
</feature>
<feature type="topological domain" description="Periplasmic" evidence="1">
    <location>
        <begin position="70"/>
        <end position="76"/>
    </location>
</feature>
<feature type="transmembrane region" description="Helical" evidence="1">
    <location>
        <begin position="77"/>
        <end position="100"/>
    </location>
</feature>
<feature type="intramembrane region" description="Helical" evidence="1">
    <location>
        <begin position="109"/>
        <end position="116"/>
    </location>
</feature>
<feature type="topological domain" description="Cytoplasmic" evidence="1">
    <location>
        <begin position="117"/>
        <end position="123"/>
    </location>
</feature>
<feature type="transmembrane region" description="Helical" evidence="1">
    <location>
        <begin position="124"/>
        <end position="141"/>
    </location>
</feature>
<feature type="transmembrane region" description="Helical" evidence="1">
    <location>
        <begin position="148"/>
        <end position="166"/>
    </location>
</feature>
<feature type="topological domain" description="Cytoplasmic" evidence="1">
    <location>
        <begin position="167"/>
        <end position="176"/>
    </location>
</feature>
<feature type="intramembrane region" description="Helical" evidence="1">
    <location>
        <begin position="177"/>
        <end position="189"/>
    </location>
</feature>
<feature type="intramembrane region" description="Helical" evidence="1">
    <location>
        <begin position="193"/>
        <end position="201"/>
    </location>
</feature>
<feature type="topological domain" description="Cytoplasmic" evidence="1">
    <location>
        <begin position="202"/>
        <end position="214"/>
    </location>
</feature>
<feature type="transmembrane region" description="Helical" evidence="1">
    <location>
        <begin position="215"/>
        <end position="232"/>
    </location>
</feature>
<feature type="topological domain" description="Periplasmic" evidence="1">
    <location>
        <begin position="233"/>
        <end position="252"/>
    </location>
</feature>
<feature type="transmembrane region" description="Helical" evidence="1">
    <location>
        <begin position="253"/>
        <end position="281"/>
    </location>
</feature>
<feature type="topological domain" description="Cytoplasmic" evidence="1">
    <location>
        <begin position="282"/>
        <end position="287"/>
    </location>
</feature>
<feature type="transmembrane region" description="Helical" evidence="1">
    <location>
        <begin position="288"/>
        <end position="309"/>
    </location>
</feature>
<feature type="topological domain" description="Periplasmic" evidence="1">
    <location>
        <begin position="310"/>
        <end position="329"/>
    </location>
</feature>
<feature type="transmembrane region" description="Helical" evidence="1">
    <location>
        <begin position="330"/>
        <end position="349"/>
    </location>
</feature>
<feature type="transmembrane region" description="Helical" evidence="1">
    <location>
        <begin position="355"/>
        <end position="376"/>
    </location>
</feature>
<feature type="topological domain" description="Periplasmic" evidence="1">
    <location>
        <begin position="377"/>
        <end position="386"/>
    </location>
</feature>
<feature type="intramembrane region" description="Helical" evidence="1">
    <location>
        <begin position="387"/>
        <end position="401"/>
    </location>
</feature>
<feature type="intramembrane region" description="Note=Loop between two helices" evidence="1">
    <location>
        <begin position="402"/>
        <end position="404"/>
    </location>
</feature>
<feature type="intramembrane region" description="Helical" evidence="1">
    <location>
        <begin position="405"/>
        <end position="416"/>
    </location>
</feature>
<feature type="intramembrane region" description="Note=Loop between two helices" evidence="1">
    <location>
        <begin position="417"/>
        <end position="421"/>
    </location>
</feature>
<feature type="transmembrane region" description="Helical" evidence="1">
    <location>
        <begin position="422"/>
        <end position="438"/>
    </location>
</feature>
<feature type="topological domain" description="Cytoplasmic" evidence="1">
    <location>
        <begin position="439"/>
        <end position="473"/>
    </location>
</feature>
<feature type="short sequence motif" description="Selectivity filter part_1" evidence="1">
    <location>
        <begin position="106"/>
        <end position="110"/>
    </location>
</feature>
<feature type="short sequence motif" description="Selectivity filter part_2" evidence="1">
    <location>
        <begin position="146"/>
        <end position="150"/>
    </location>
</feature>
<feature type="short sequence motif" description="Selectivity filter part_3" evidence="1">
    <location>
        <begin position="355"/>
        <end position="359"/>
    </location>
</feature>
<feature type="binding site" evidence="1">
    <location>
        <position position="107"/>
    </location>
    <ligand>
        <name>chloride</name>
        <dbReference type="ChEBI" id="CHEBI:17996"/>
    </ligand>
</feature>
<feature type="binding site" evidence="1">
    <location>
        <position position="356"/>
    </location>
    <ligand>
        <name>chloride</name>
        <dbReference type="ChEBI" id="CHEBI:17996"/>
    </ligand>
</feature>
<feature type="binding site" evidence="1">
    <location>
        <position position="357"/>
    </location>
    <ligand>
        <name>chloride</name>
        <dbReference type="ChEBI" id="CHEBI:17996"/>
    </ligand>
</feature>
<feature type="binding site" evidence="1">
    <location>
        <position position="445"/>
    </location>
    <ligand>
        <name>chloride</name>
        <dbReference type="ChEBI" id="CHEBI:17996"/>
    </ligand>
</feature>
<feature type="site" description="Mediates proton transfer from the outer aqueous phase to the interior of the protein; involved in linking H(+) and Cl(-) transport" evidence="1">
    <location>
        <position position="148"/>
    </location>
</feature>
<feature type="site" description="Mediates proton transfer from the protein to the inner aqueous phase" evidence="1">
    <location>
        <position position="203"/>
    </location>
</feature>